<keyword id="KW-1003">Cell membrane</keyword>
<keyword id="KW-0444">Lipid biosynthesis</keyword>
<keyword id="KW-0443">Lipid metabolism</keyword>
<keyword id="KW-0472">Membrane</keyword>
<keyword id="KW-0594">Phospholipid biosynthesis</keyword>
<keyword id="KW-1208">Phospholipid metabolism</keyword>
<keyword id="KW-0677">Repeat</keyword>
<keyword id="KW-0808">Transferase</keyword>
<keyword id="KW-0812">Transmembrane</keyword>
<keyword id="KW-1133">Transmembrane helix</keyword>
<name>CLS1_STAAC</name>
<gene>
    <name type="primary">cls1</name>
    <name type="ordered locus">SACOL1351</name>
</gene>
<accession>Q5HGA3</accession>
<evidence type="ECO:0000255" key="1">
    <source>
        <dbReference type="HAMAP-Rule" id="MF_01916"/>
    </source>
</evidence>
<organism>
    <name type="scientific">Staphylococcus aureus (strain COL)</name>
    <dbReference type="NCBI Taxonomy" id="93062"/>
    <lineage>
        <taxon>Bacteria</taxon>
        <taxon>Bacillati</taxon>
        <taxon>Bacillota</taxon>
        <taxon>Bacilli</taxon>
        <taxon>Bacillales</taxon>
        <taxon>Staphylococcaceae</taxon>
        <taxon>Staphylococcus</taxon>
    </lineage>
</organism>
<protein>
    <recommendedName>
        <fullName evidence="1">Cardiolipin synthase 1</fullName>
        <shortName evidence="1">CL synthase 1</shortName>
        <ecNumber evidence="1">2.7.8.-</ecNumber>
    </recommendedName>
</protein>
<reference key="1">
    <citation type="journal article" date="2005" name="J. Bacteriol.">
        <title>Insights on evolution of virulence and resistance from the complete genome analysis of an early methicillin-resistant Staphylococcus aureus strain and a biofilm-producing methicillin-resistant Staphylococcus epidermidis strain.</title>
        <authorList>
            <person name="Gill S.R."/>
            <person name="Fouts D.E."/>
            <person name="Archer G.L."/>
            <person name="Mongodin E.F."/>
            <person name="DeBoy R.T."/>
            <person name="Ravel J."/>
            <person name="Paulsen I.T."/>
            <person name="Kolonay J.F."/>
            <person name="Brinkac L.M."/>
            <person name="Beanan M.J."/>
            <person name="Dodson R.J."/>
            <person name="Daugherty S.C."/>
            <person name="Madupu R."/>
            <person name="Angiuoli S.V."/>
            <person name="Durkin A.S."/>
            <person name="Haft D.H."/>
            <person name="Vamathevan J.J."/>
            <person name="Khouri H."/>
            <person name="Utterback T.R."/>
            <person name="Lee C."/>
            <person name="Dimitrov G."/>
            <person name="Jiang L."/>
            <person name="Qin H."/>
            <person name="Weidman J."/>
            <person name="Tran K."/>
            <person name="Kang K.H."/>
            <person name="Hance I.R."/>
            <person name="Nelson K.E."/>
            <person name="Fraser C.M."/>
        </authorList>
    </citation>
    <scope>NUCLEOTIDE SEQUENCE [LARGE SCALE GENOMIC DNA]</scope>
    <source>
        <strain>COL</strain>
    </source>
</reference>
<dbReference type="EC" id="2.7.8.-" evidence="1"/>
<dbReference type="EMBL" id="CP000046">
    <property type="protein sequence ID" value="AAW36600.1"/>
    <property type="molecule type" value="Genomic_DNA"/>
</dbReference>
<dbReference type="SMR" id="Q5HGA3"/>
<dbReference type="KEGG" id="sac:SACOL1351"/>
<dbReference type="HOGENOM" id="CLU_038053_1_1_9"/>
<dbReference type="Proteomes" id="UP000000530">
    <property type="component" value="Chromosome"/>
</dbReference>
<dbReference type="GO" id="GO:0005886">
    <property type="term" value="C:plasma membrane"/>
    <property type="evidence" value="ECO:0007669"/>
    <property type="project" value="UniProtKB-SubCell"/>
</dbReference>
<dbReference type="GO" id="GO:0008808">
    <property type="term" value="F:cardiolipin synthase activity"/>
    <property type="evidence" value="ECO:0007669"/>
    <property type="project" value="InterPro"/>
</dbReference>
<dbReference type="GO" id="GO:0032049">
    <property type="term" value="P:cardiolipin biosynthetic process"/>
    <property type="evidence" value="ECO:0007669"/>
    <property type="project" value="InterPro"/>
</dbReference>
<dbReference type="CDD" id="cd09110">
    <property type="entry name" value="PLDc_CLS_1"/>
    <property type="match status" value="1"/>
</dbReference>
<dbReference type="CDD" id="cd09112">
    <property type="entry name" value="PLDc_CLS_2"/>
    <property type="match status" value="1"/>
</dbReference>
<dbReference type="FunFam" id="3.30.870.10:FF:000014">
    <property type="entry name" value="Cardiolipin synthase"/>
    <property type="match status" value="1"/>
</dbReference>
<dbReference type="Gene3D" id="3.30.870.10">
    <property type="entry name" value="Endonuclease Chain A"/>
    <property type="match status" value="2"/>
</dbReference>
<dbReference type="HAMAP" id="MF_01916">
    <property type="entry name" value="Cardiolipin_synth_Cls"/>
    <property type="match status" value="1"/>
</dbReference>
<dbReference type="InterPro" id="IPR030874">
    <property type="entry name" value="Cardiolipin_synth_Firmi"/>
</dbReference>
<dbReference type="InterPro" id="IPR022924">
    <property type="entry name" value="Cardiolipin_synthase"/>
</dbReference>
<dbReference type="InterPro" id="IPR027379">
    <property type="entry name" value="CLS_N"/>
</dbReference>
<dbReference type="InterPro" id="IPR025202">
    <property type="entry name" value="PLD-like_dom"/>
</dbReference>
<dbReference type="InterPro" id="IPR001736">
    <property type="entry name" value="PLipase_D/transphosphatidylase"/>
</dbReference>
<dbReference type="NCBIfam" id="TIGR04265">
    <property type="entry name" value="bac_cardiolipin"/>
    <property type="match status" value="1"/>
</dbReference>
<dbReference type="PANTHER" id="PTHR21248">
    <property type="entry name" value="CARDIOLIPIN SYNTHASE"/>
    <property type="match status" value="1"/>
</dbReference>
<dbReference type="PANTHER" id="PTHR21248:SF22">
    <property type="entry name" value="PHOSPHOLIPASE D"/>
    <property type="match status" value="1"/>
</dbReference>
<dbReference type="Pfam" id="PF13091">
    <property type="entry name" value="PLDc_2"/>
    <property type="match status" value="2"/>
</dbReference>
<dbReference type="Pfam" id="PF13396">
    <property type="entry name" value="PLDc_N"/>
    <property type="match status" value="1"/>
</dbReference>
<dbReference type="SMART" id="SM00155">
    <property type="entry name" value="PLDc"/>
    <property type="match status" value="2"/>
</dbReference>
<dbReference type="SUPFAM" id="SSF56024">
    <property type="entry name" value="Phospholipase D/nuclease"/>
    <property type="match status" value="2"/>
</dbReference>
<dbReference type="PROSITE" id="PS50035">
    <property type="entry name" value="PLD"/>
    <property type="match status" value="2"/>
</dbReference>
<sequence>MRFTFSNDLGTLFTIILAIGFIINLVLAFIIIFLERNRRTASSTWAWLFVLFVLPLIGFILYLFFGRTVSARKLNKNNGNVLTDFDGLLKQQIESFDKGNYGTDNKQVQKHHDLVRMLLMDQDGFLTENNKVDHFIDGNDLYDQVLKDIKNAKEYIHLEYYTFALDGLGKRILHALEEKLKQGLEVKILYDDVGSKNVKMANFDHFKSLGGEVEAFFASKLPLLNFRMNNRNHRKIIVIDGQLGYVGGFNIGDEYLGLGKLGYWRDTHLRIQGDAVDALQLRFILDWNSQAHRPQFEYDVKYFPKKNGPLGNSPIQIAASGPASDWHQIEYGYTKMIMSAKKSVYLQSPYFIPDNSYINAIKIAAKSGVDVHLMIPCKPDHPLVYWATFSNASDLLSSGVKIYTYENGFIHSKMCLIDDEIVSVGTANMDFRSFELNFEVNAFVYDENLAKDLRVAYEHDITKSKQLTKESYANRPLSVKFKESLAKLVSPIL</sequence>
<feature type="chain" id="PRO_0000201267" description="Cardiolipin synthase 1">
    <location>
        <begin position="1"/>
        <end position="493"/>
    </location>
</feature>
<feature type="transmembrane region" description="Helical" evidence="1">
    <location>
        <begin position="13"/>
        <end position="33"/>
    </location>
</feature>
<feature type="transmembrane region" description="Helical" evidence="1">
    <location>
        <begin position="45"/>
        <end position="65"/>
    </location>
</feature>
<feature type="domain" description="PLD phosphodiesterase 1" evidence="1">
    <location>
        <begin position="228"/>
        <end position="255"/>
    </location>
</feature>
<feature type="domain" description="PLD phosphodiesterase 2" evidence="1">
    <location>
        <begin position="406"/>
        <end position="433"/>
    </location>
</feature>
<feature type="active site" evidence="1">
    <location>
        <position position="233"/>
    </location>
</feature>
<feature type="active site" evidence="1">
    <location>
        <position position="235"/>
    </location>
</feature>
<feature type="active site" evidence="1">
    <location>
        <position position="240"/>
    </location>
</feature>
<feature type="active site" evidence="1">
    <location>
        <position position="411"/>
    </location>
</feature>
<feature type="active site" evidence="1">
    <location>
        <position position="413"/>
    </location>
</feature>
<feature type="active site" evidence="1">
    <location>
        <position position="418"/>
    </location>
</feature>
<proteinExistence type="inferred from homology"/>
<comment type="function">
    <text evidence="1">Catalyzes the reversible phosphatidyl group transfer from one phosphatidylglycerol molecule to another to form cardiolipin (CL) (diphosphatidylglycerol) and glycerol.</text>
</comment>
<comment type="catalytic activity">
    <reaction evidence="1">
        <text>2 a 1,2-diacyl-sn-glycero-3-phospho-(1'-sn-glycerol) = a cardiolipin + glycerol</text>
        <dbReference type="Rhea" id="RHEA:31451"/>
        <dbReference type="ChEBI" id="CHEBI:17754"/>
        <dbReference type="ChEBI" id="CHEBI:62237"/>
        <dbReference type="ChEBI" id="CHEBI:64716"/>
    </reaction>
</comment>
<comment type="subcellular location">
    <subcellularLocation>
        <location evidence="1">Cell membrane</location>
        <topology evidence="1">Multi-pass membrane protein</topology>
    </subcellularLocation>
</comment>
<comment type="similarity">
    <text evidence="1">Belongs to the phospholipase D family. Cardiolipin synthase subfamily.</text>
</comment>